<comment type="function">
    <text evidence="2 9 10 14 16 17 18">Fatty acid synthase alpha subunit; part of the fragmented gene cluster that mediates the biosynthesis of dothistromin (DOTH), a polyketide toxin very similar in structure to the aflatoxin precursor, versicolorin B (PubMed:12039746, PubMed:17683963, PubMed:22069571, PubMed:23207690, PubMed:23448391). The first step of the pathway is the conversion of acetate to norsolorinic acid (NOR) and requires the fatty acid synthase subunits hexA and hexB, as well as the polyketide synthase pksA (PubMed:16649078, PubMed:23207690). PksA combines a hexanoyl starter unit and 7 malonyl-CoA extender units to synthesize the precursor NOR (By similarity). The hexanoyl starter unit is provided to the acyl-carrier protein (ACP) domain by the fungal fatty acid synthase hexA/hexB (By similarity). The second step is the conversion of NOR to averantin (AVN) and requires the norsolorinic acid ketoreductase nor1, which catalyzes the dehydration of norsolorinic acid to form (1'S)-averantin (PubMed:23207690). The cytochrome P450 monooxygenase avnA then catalyzes the hydroxylation of AVN to 5'hydroxyaverantin (HAVN) (PubMed:23207690). The next step is performed by adhA that transforms HAVN to averufin (AVF) (PubMed:23207690). Averufin might then be converted to hydroxyversicolorone by cypX and avfA (PubMed:23207690). Hydroxyversicolorone is further converted versiconal hemiacetal acetate (VHA) by moxY (PubMed:23207690). VHA is then the substrate for the versiconal hemiacetal acetate esterase est1 to yield versiconal (VAL) (PubMed:23207690). Versicolorin B synthase vbsA then converts VAL to versicolorin B (VERB) by closing the bisfuran ring (PubMed:16649078, PubMed:23207690). Then, the activity of the versicolorin B desaturase verB leads to versicolorin A (VERA) (PubMed:23207690). DotB, a predicted chloroperoxidase, may perform epoxidation of the A-ring of VERA (PubMed:23207690). Alternatively, a cytochrome P450, such as cypX or avnA could catalyze this step (PubMed:23207690). It is also possible that another, uncharacterized, cytochrome P450 enzyme is responsible for this step (PubMed:23207690). Opening of the epoxide could potentially be achieved by the epoxide hydrolase epoA (PubMed:23207690). However, epoA seems not to be required for DOTH biosynthesis, but other epoxide hydrolases may have the ability to complement this hydrolysis (PubMed:23207690). Alternatively, opening of the epoxide ring could be achieved non-enzymatically (PubMed:23207690). The next step is the deoxygenation of ring A to yield the 5,8-dihydroxyanthraquinone which is most likely catalyzed by the NADPH dehydrogenase encoded by ver1 (PubMed:23207690). The last stages of DOTH biosynthesis are proposed to involve hydroxylation of the bisfuran (PubMed:23207690). OrdB and norB might have oxidative roles here (PubMed:23207690). An alternative possibility is that cytochrome P450 monoogenases such as avnA and cypX might perform these steps in addition to previously proposed steps (PubMed:23207690).</text>
</comment>
<comment type="catalytic activity">
    <reaction evidence="1">
        <text>acetyl-CoA + n malonyl-CoA + 2n NADPH + 4n H(+) = a long-chain-acyl-CoA + n CoA + n CO2 + 2n NADP(+).</text>
        <dbReference type="EC" id="2.3.1.86"/>
    </reaction>
</comment>
<comment type="catalytic activity">
    <reaction evidence="7">
        <text>a fatty acyl-[ACP] + malonyl-[ACP] + H(+) = a 3-oxoacyl-[ACP] + holo-[ACP] + CO2</text>
        <dbReference type="Rhea" id="RHEA:22836"/>
        <dbReference type="Rhea" id="RHEA-COMP:9623"/>
        <dbReference type="Rhea" id="RHEA-COMP:9685"/>
        <dbReference type="Rhea" id="RHEA-COMP:9916"/>
        <dbReference type="Rhea" id="RHEA-COMP:14125"/>
        <dbReference type="ChEBI" id="CHEBI:15378"/>
        <dbReference type="ChEBI" id="CHEBI:16526"/>
        <dbReference type="ChEBI" id="CHEBI:64479"/>
        <dbReference type="ChEBI" id="CHEBI:78449"/>
        <dbReference type="ChEBI" id="CHEBI:78776"/>
        <dbReference type="ChEBI" id="CHEBI:138651"/>
        <dbReference type="EC" id="2.3.1.41"/>
    </reaction>
</comment>
<comment type="catalytic activity">
    <reaction evidence="1">
        <text>a (3R)-hydroxyacyl-[ACP] + NADP(+) = a 3-oxoacyl-[ACP] + NADPH + H(+)</text>
        <dbReference type="Rhea" id="RHEA:17397"/>
        <dbReference type="Rhea" id="RHEA-COMP:9916"/>
        <dbReference type="Rhea" id="RHEA-COMP:9945"/>
        <dbReference type="ChEBI" id="CHEBI:15378"/>
        <dbReference type="ChEBI" id="CHEBI:57783"/>
        <dbReference type="ChEBI" id="CHEBI:58349"/>
        <dbReference type="ChEBI" id="CHEBI:78776"/>
        <dbReference type="ChEBI" id="CHEBI:78827"/>
        <dbReference type="EC" id="1.1.1.100"/>
    </reaction>
</comment>
<comment type="pathway">
    <text evidence="14 17">Mycotoxin biosynthesis.</text>
</comment>
<comment type="subunit">
    <text evidence="1">[Alpha(6)beta(6)] hexamers of two multifunctional subunits (alpha and beta).</text>
</comment>
<comment type="induction">
    <text evidence="11 12">Expression is positively regulated by the dothistromin-specific transcription factors aflR and aflJ (PubMed:23207690, PubMed:25986547).</text>
</comment>
<comment type="PTM">
    <text evidence="15">4'-phosphopantetheine is transferred from CoA to a specific serine of the acyl carrier domain by the C-terminal PPT domain. This modification is essential for activity because fatty acids are bound in thioester linkage to the sulfhydryl of the prosthetic group.</text>
</comment>
<comment type="similarity">
    <text evidence="15">Belongs to the thiolase-like superfamily. Fungal fatty acid synthetase subunit alpha family.</text>
</comment>
<evidence type="ECO:0000250" key="1">
    <source>
        <dbReference type="UniProtKB" id="P19097"/>
    </source>
</evidence>
<evidence type="ECO:0000250" key="2">
    <source>
        <dbReference type="UniProtKB" id="Q12437"/>
    </source>
</evidence>
<evidence type="ECO:0000250" key="3">
    <source>
        <dbReference type="UniProtKB" id="Q8TGA2"/>
    </source>
</evidence>
<evidence type="ECO:0000255" key="4"/>
<evidence type="ECO:0000255" key="5">
    <source>
        <dbReference type="PROSITE-ProRule" id="PRU00258"/>
    </source>
</evidence>
<evidence type="ECO:0000255" key="6">
    <source>
        <dbReference type="PROSITE-ProRule" id="PRU01348"/>
    </source>
</evidence>
<evidence type="ECO:0000255" key="7">
    <source>
        <dbReference type="PROSITE-ProRule" id="PRU10022"/>
    </source>
</evidence>
<evidence type="ECO:0000256" key="8">
    <source>
        <dbReference type="SAM" id="MobiDB-lite"/>
    </source>
</evidence>
<evidence type="ECO:0000269" key="9">
    <source>
    </source>
</evidence>
<evidence type="ECO:0000269" key="10">
    <source>
    </source>
</evidence>
<evidence type="ECO:0000269" key="11">
    <source>
    </source>
</evidence>
<evidence type="ECO:0000269" key="12">
    <source>
    </source>
</evidence>
<evidence type="ECO:0000303" key="13">
    <source>
    </source>
</evidence>
<evidence type="ECO:0000303" key="14">
    <source>
    </source>
</evidence>
<evidence type="ECO:0000305" key="15"/>
<evidence type="ECO:0000305" key="16">
    <source>
    </source>
</evidence>
<evidence type="ECO:0000305" key="17">
    <source>
    </source>
</evidence>
<evidence type="ECO:0000305" key="18">
    <source>
    </source>
</evidence>
<reference key="1">
    <citation type="journal article" date="2012" name="PLoS Genet.">
        <title>The genomes of the fungal plant pathogens Cladosporium fulvum and Dothistroma septosporum reveal adaptation to different hosts and lifestyles but also signatures of common ancestry.</title>
        <authorList>
            <person name="de Wit P.J.G.M."/>
            <person name="van der Burgt A."/>
            <person name="Oekmen B."/>
            <person name="Stergiopoulos I."/>
            <person name="Abd-Elsalam K.A."/>
            <person name="Aerts A.L."/>
            <person name="Bahkali A.H."/>
            <person name="Beenen H.G."/>
            <person name="Chettri P."/>
            <person name="Cox M.P."/>
            <person name="Datema E."/>
            <person name="de Vries R.P."/>
            <person name="Dhillon B."/>
            <person name="Ganley A.R."/>
            <person name="Griffiths S.A."/>
            <person name="Guo Y."/>
            <person name="Hamelin R.C."/>
            <person name="Henrissat B."/>
            <person name="Kabir M.S."/>
            <person name="Jashni M.K."/>
            <person name="Kema G."/>
            <person name="Klaubauf S."/>
            <person name="Lapidus A."/>
            <person name="Levasseur A."/>
            <person name="Lindquist E."/>
            <person name="Mehrabi R."/>
            <person name="Ohm R.A."/>
            <person name="Owen T.J."/>
            <person name="Salamov A."/>
            <person name="Schwelm A."/>
            <person name="Schijlen E."/>
            <person name="Sun H."/>
            <person name="van den Burg H.A."/>
            <person name="van Ham R.C.H.J."/>
            <person name="Zhang S."/>
            <person name="Goodwin S.B."/>
            <person name="Grigoriev I.V."/>
            <person name="Collemare J."/>
            <person name="Bradshaw R.E."/>
        </authorList>
    </citation>
    <scope>NUCLEOTIDE SEQUENCE [LARGE SCALE GENOMIC DNA]</scope>
    <source>
        <strain>NZE10 / CBS 128990</strain>
    </source>
</reference>
<reference key="2">
    <citation type="journal article" date="2012" name="PLoS Pathog.">
        <title>Diverse lifestyles and strategies of plant pathogenesis encoded in the genomes of eighteen Dothideomycetes fungi.</title>
        <authorList>
            <person name="Ohm R.A."/>
            <person name="Feau N."/>
            <person name="Henrissat B."/>
            <person name="Schoch C.L."/>
            <person name="Horwitz B.A."/>
            <person name="Barry K.W."/>
            <person name="Condon B.J."/>
            <person name="Copeland A.C."/>
            <person name="Dhillon B."/>
            <person name="Glaser F."/>
            <person name="Hesse C.N."/>
            <person name="Kosti I."/>
            <person name="LaButti K."/>
            <person name="Lindquist E.A."/>
            <person name="Lucas S."/>
            <person name="Salamov A.A."/>
            <person name="Bradshaw R.E."/>
            <person name="Ciuffetti L."/>
            <person name="Hamelin R.C."/>
            <person name="Kema G.H.J."/>
            <person name="Lawrence C."/>
            <person name="Scott J.A."/>
            <person name="Spatafora J.W."/>
            <person name="Turgeon B.G."/>
            <person name="de Wit P.J.G.M."/>
            <person name="Zhong S."/>
            <person name="Goodwin S.B."/>
            <person name="Grigoriev I.V."/>
        </authorList>
    </citation>
    <scope>NUCLEOTIDE SEQUENCE [LARGE SCALE GENOMIC DNA]</scope>
    <source>
        <strain>NZE10 / CBS 128990</strain>
    </source>
</reference>
<reference key="3">
    <citation type="journal article" date="2002" name="Appl. Environ. Microbiol.">
        <title>Dothistroma pini, a forest pathogen, contains homologs of aflatoxin biosynthetic pathway genes.</title>
        <authorList>
            <person name="Bradshaw R.E."/>
            <person name="Bhatnagar D."/>
            <person name="Ganley R.J."/>
            <person name="Gillman C.J."/>
            <person name="Monahan B.J."/>
            <person name="Seconi J.M."/>
        </authorList>
    </citation>
    <scope>FUNCTION</scope>
</reference>
<reference key="4">
    <citation type="journal article" date="2006" name="Mycopathologia">
        <title>A polyketide synthase gene required for biosynthesis of the aflatoxin-like toxin, dothistromin.</title>
        <authorList>
            <person name="Bradshaw R.E."/>
            <person name="Jin H."/>
            <person name="Morgan B.S."/>
            <person name="Schwelm A."/>
            <person name="Teddy O.R."/>
            <person name="Young C.A."/>
            <person name="Zhang S."/>
        </authorList>
    </citation>
    <scope>FUNCTION</scope>
</reference>
<reference key="5">
    <citation type="journal article" date="2007" name="Fungal Genet. Biol.">
        <title>A fragmented aflatoxin-like gene cluster in the forest pathogen Dothistroma septosporum.</title>
        <authorList>
            <person name="Zhang S."/>
            <person name="Schwelm A."/>
            <person name="Jin H."/>
            <person name="Collins L.J."/>
            <person name="Bradshaw R.E."/>
        </authorList>
    </citation>
    <scope>FUNCTION</scope>
</reference>
<reference key="6">
    <citation type="journal article" date="2010" name="Toxins">
        <title>Genetics of dothistromin biosynthesis of Dothistroma septosporum: an update.</title>
        <authorList>
            <person name="Schwelm A."/>
            <person name="Bradshaw R.E."/>
        </authorList>
    </citation>
    <scope>REVIEW ON FUNCTION</scope>
    <scope>PATHWAY</scope>
</reference>
<reference key="7">
    <citation type="journal article" date="2013" name="Fungal Genet. Biol.">
        <title>Dothistromin genes at multiple separate loci are regulated by AflR.</title>
        <authorList>
            <person name="Chettri P."/>
            <person name="Ehrlich K.C."/>
            <person name="Cary J.W."/>
            <person name="Collemare J."/>
            <person name="Cox M.P."/>
            <person name="Griffiths S.A."/>
            <person name="Olson M.A."/>
            <person name="de Wit P.J."/>
            <person name="Bradshaw R.E."/>
        </authorList>
    </citation>
    <scope>FUNCTION</scope>
    <scope>INDUCTION</scope>
    <scope>PATHWAY</scope>
</reference>
<reference key="8">
    <citation type="journal article" date="2013" name="New Phytol.">
        <title>Fragmentation of an aflatoxin-like gene cluster in a forest pathogen.</title>
        <authorList>
            <person name="Bradshaw R.E."/>
            <person name="Slot J.C."/>
            <person name="Moore G.G."/>
            <person name="Chettri P."/>
            <person name="de Wit P.J."/>
            <person name="Ehrlich K.C."/>
            <person name="Ganley A.R."/>
            <person name="Olson M.A."/>
            <person name="Rokas A."/>
            <person name="Carbone I."/>
            <person name="Cox M.P."/>
        </authorList>
    </citation>
    <scope>FUNCTION</scope>
</reference>
<reference key="9">
    <citation type="journal article" date="2015" name="Fungal Biol.">
        <title>Regulation of the aflatoxin-like toxin dothistromin by AflJ.</title>
        <authorList>
            <person name="Chettri P."/>
            <person name="Ehrlich K.C."/>
            <person name="Bradshaw R.E."/>
        </authorList>
    </citation>
    <scope>INDUCTION</scope>
</reference>
<organism>
    <name type="scientific">Dothistroma septosporum (strain NZE10 / CBS 128990)</name>
    <name type="common">Red band needle blight fungus</name>
    <name type="synonym">Mycosphaerella pini</name>
    <dbReference type="NCBI Taxonomy" id="675120"/>
    <lineage>
        <taxon>Eukaryota</taxon>
        <taxon>Fungi</taxon>
        <taxon>Dikarya</taxon>
        <taxon>Ascomycota</taxon>
        <taxon>Pezizomycotina</taxon>
        <taxon>Dothideomycetes</taxon>
        <taxon>Dothideomycetidae</taxon>
        <taxon>Mycosphaerellales</taxon>
        <taxon>Mycosphaerellaceae</taxon>
        <taxon>Dothistroma</taxon>
    </lineage>
</organism>
<protein>
    <recommendedName>
        <fullName evidence="1">Fatty acid synthase alpha subunit hexA</fullName>
        <ecNumber evidence="1">2.3.1.86</ecNumber>
    </recommendedName>
    <domain>
        <recommendedName>
            <fullName evidence="1">3-oxoacyl-[acyl-carrier-protein] reductase</fullName>
            <ecNumber evidence="1">1.1.1.100</ecNumber>
        </recommendedName>
        <alternativeName>
            <fullName evidence="3">Beta-ketoacyl reductase</fullName>
        </alternativeName>
    </domain>
    <domain>
        <recommendedName>
            <fullName evidence="1">3-oxoacyl-[acyl-carrier-protein] synthase</fullName>
            <ecNumber evidence="1">2.3.1.41</ecNumber>
        </recommendedName>
        <alternativeName>
            <fullName evidence="13">Dothistromin biosynthesis protein hexA</fullName>
        </alternativeName>
    </domain>
</protein>
<gene>
    <name evidence="13" type="primary">hexA</name>
    <name type="ORF">DOTSEDRAFT_66976</name>
</gene>
<sequence>MGQKTIKRKIQSAERPAEADVAFLASTQHSKDLCYEYDAPEEVAVEEPVDETPAPETAPERPPLSRAKTAAVKPQETAAPTTATIADVPLSAEEIVRALVARKLKKPILSIPTSKSVKELCNGKSTLQNEIVGDFHSEFTNLPDRPEDIPLKELVPASQSLMLGRVSSALLSKLVSSKMPARFNADAIGKYLASKWGLGPLRSVAVMLFAIAAEPEARLGSVAAAEKYLDDTAAKYAEWAGITLQERSTQSSAGGGGSSGTVDPTVLAELTKTNTRLAKRQFQALAEYLQVDLMKPSSEQESEALAVELQQKLDAWTAEFSEEFLAGVAPTFSEKKSRRYNAWWNAARQDVLALFSGNLQEDLSRDAAALEAFLDRLSNRAGESLLAMTRSLSRRNQANAIPGLTDIARRAEKAISSCIDRPATAKVHLPATRPRTTVSDEGDIKFNEVPRPDVSGHAAYADVLQAKDLNGHPAAARFVSLKSAHSHTDLTNGMLDRIRTALDSGMSFAGKNILITGAGQGSIGAEVVRILLTGGARVIVTTSREPSSTAKYFQQMYEESGAKGSELILTRFNQASAKDCENLVDHIYDSSGLDRDLDAVLPFAAAPEGGTEIQDVGAKNELVHRLMLASVFRMLGRVIKNKRDRSIDCHPTQVLLPLSPNHGTFGGDGMYAESKLGLESLVNRVQSESWSDELAICGVKIGWTRGTGLMNANDIVAEAIEDHGVLTFSVQEMAFNIAMLMTPELVDLCENAPLMADFGGGLSALEDCAKILSAARTEINTAADVARAVKAEDDLERAASRTLPAPSSTSPVAKKSMLRIGFPRLPDFELELSPLEHLRDIKDPSETVVVVGFSELGPWGSARLRWEIESKGDFSQVGYMEMAWMMDLIKHVDGPTKNGYYVGWVDSKTGESVHDAEIEARYGEVIRKHSGIRFVDPEGSAGYDPSKKEYLHEVAVEEDLPEFEASSATAEAFRLRHGTNVSISPIEGTENCRVQVKRGASIKIPKSVPFTWGSVAGQLPKGWSPKKYGIPEDLIPQLDPVSLYTICCVAEAFYSAGITDPLEIFKYIHLSEIGNFLGSSMGGALKTRQMYRDIYLDKDIQSDVLQETYLNTTGAWVNMLLLGSTGPIKTPMGACATGVESIDSAFESIMSDKTRMCIVGGFDDFHEDESYGFSTMKATVNVEEELAKGRLPSEMSRPTAESRSGFVEAHGCGVQILCRGDVALEMGLPVYGIIAGSTMAADKVGRSVPAPGQGILTFARETGQAQLDKSSPSTNTTSRTSSVSLARRGATVSPLRASLDAWGLTIDDLDVASLHGTSTKANDLNEPEVICKQMDHLGRTPGRPLWAICQKSVTGHPKAPAAAWMLNGCLQVMDSRTIPANRNADNVDPALQTATHLCFPTRPVRVQDVRAFILTSFGFGQKGGQVVGVAPKYFFATLDEEVYKDYSVRVTKRSKTADRAYAKALMSNAIVKVQDHSPYEQEDQSRIFMDPLSRITEDAETGSYHFDTKDIRNVADVKARLTRLVRGERLNARPDAASGLAQAARSAQAWIEKQTGGRSSVDTSTVGIDLVDLSAFSAHENETFIERNFTEQEKAFAKQSLDQKMAFASRWAAKEAVFKCLHTQTKGAGAAMKDIEIVKSDNAPKVKLHNDCIKAGRKAGLEDIQLSISHGEDCLIAVAIGIAGNGPAKYTL</sequence>
<feature type="chain" id="PRO_0000443458" description="Fatty acid synthase alpha subunit hexA">
    <location>
        <begin position="1"/>
        <end position="1692"/>
    </location>
</feature>
<feature type="domain" description="Carrier" evidence="5">
    <location>
        <begin position="90"/>
        <end position="174"/>
    </location>
</feature>
<feature type="domain" description="Ketosynthase family 3 (KS3)" evidence="6">
    <location>
        <begin position="948"/>
        <end position="1430"/>
    </location>
</feature>
<feature type="region of interest" description="Disordered" evidence="8">
    <location>
        <begin position="44"/>
        <end position="80"/>
    </location>
</feature>
<feature type="region of interest" description="Ketoreductase (KR) domain" evidence="3 4">
    <location>
        <begin position="508"/>
        <end position="746"/>
    </location>
</feature>
<feature type="region of interest" description="Disordered" evidence="8">
    <location>
        <begin position="1263"/>
        <end position="1287"/>
    </location>
</feature>
<feature type="compositionally biased region" description="Low complexity" evidence="8">
    <location>
        <begin position="1270"/>
        <end position="1284"/>
    </location>
</feature>
<feature type="active site" description="For beta-ketoacyl synthase activity" evidence="6">
    <location>
        <position position="1135"/>
    </location>
</feature>
<feature type="active site" description="For beta-ketoacyl synthase activity" evidence="6">
    <location>
        <position position="1315"/>
    </location>
</feature>
<feature type="active site" description="For beta-ketoacyl synthase activity" evidence="6">
    <location>
        <position position="1356"/>
    </location>
</feature>
<feature type="binding site" evidence="1">
    <location>
        <begin position="1569"/>
        <end position="1571"/>
    </location>
    <ligand>
        <name>acetyl-CoA</name>
        <dbReference type="ChEBI" id="CHEBI:57288"/>
    </ligand>
</feature>
<feature type="binding site" evidence="1">
    <location>
        <position position="1569"/>
    </location>
    <ligand>
        <name>Mg(2+)</name>
        <dbReference type="ChEBI" id="CHEBI:18420"/>
    </ligand>
</feature>
<feature type="binding site" evidence="1">
    <location>
        <begin position="1615"/>
        <end position="1625"/>
    </location>
    <ligand>
        <name>acetyl-CoA</name>
        <dbReference type="ChEBI" id="CHEBI:57288"/>
    </ligand>
</feature>
<feature type="binding site" evidence="1">
    <location>
        <begin position="1639"/>
        <end position="1642"/>
    </location>
    <ligand>
        <name>acetyl-CoA</name>
        <dbReference type="ChEBI" id="CHEBI:57288"/>
    </ligand>
</feature>
<feature type="binding site" evidence="1">
    <location>
        <begin position="1668"/>
        <end position="1670"/>
    </location>
    <ligand>
        <name>acetyl-CoA</name>
        <dbReference type="ChEBI" id="CHEBI:57288"/>
    </ligand>
</feature>
<feature type="binding site" evidence="1">
    <location>
        <position position="1669"/>
    </location>
    <ligand>
        <name>Mg(2+)</name>
        <dbReference type="ChEBI" id="CHEBI:18420"/>
    </ligand>
</feature>
<feature type="modified residue" description="O-(pantetheine 4'-phosphoryl)serine" evidence="5">
    <location>
        <position position="125"/>
    </location>
</feature>
<accession>M2YJJ3</accession>
<dbReference type="EC" id="2.3.1.86" evidence="1"/>
<dbReference type="EC" id="1.1.1.100" evidence="1"/>
<dbReference type="EC" id="2.3.1.41" evidence="1"/>
<dbReference type="EMBL" id="KB446546">
    <property type="protein sequence ID" value="EME39096.1"/>
    <property type="molecule type" value="Genomic_DNA"/>
</dbReference>
<dbReference type="SMR" id="M2YJJ3"/>
<dbReference type="STRING" id="675120.M2YJJ3"/>
<dbReference type="EnsemblFungi" id="EME39096">
    <property type="protein sequence ID" value="EME39096"/>
    <property type="gene ID" value="DOTSEDRAFT_66976"/>
</dbReference>
<dbReference type="eggNOG" id="ENOG502RV4X">
    <property type="taxonomic scope" value="Eukaryota"/>
</dbReference>
<dbReference type="HOGENOM" id="CLU_000114_0_0_1"/>
<dbReference type="OMA" id="VGVAPKY"/>
<dbReference type="OrthoDB" id="4251012at2759"/>
<dbReference type="Proteomes" id="UP000016933">
    <property type="component" value="Unassembled WGS sequence"/>
</dbReference>
<dbReference type="GO" id="GO:0005835">
    <property type="term" value="C:fatty acid synthase complex"/>
    <property type="evidence" value="ECO:0007669"/>
    <property type="project" value="InterPro"/>
</dbReference>
<dbReference type="GO" id="GO:0004316">
    <property type="term" value="F:3-oxoacyl-[acyl-carrier-protein] reductase (NADPH) activity"/>
    <property type="evidence" value="ECO:0007669"/>
    <property type="project" value="UniProtKB-EC"/>
</dbReference>
<dbReference type="GO" id="GO:0004315">
    <property type="term" value="F:3-oxoacyl-[acyl-carrier-protein] synthase activity"/>
    <property type="evidence" value="ECO:0007669"/>
    <property type="project" value="UniProtKB-EC"/>
</dbReference>
<dbReference type="GO" id="GO:0004312">
    <property type="term" value="F:fatty acid synthase activity"/>
    <property type="evidence" value="ECO:0007669"/>
    <property type="project" value="InterPro"/>
</dbReference>
<dbReference type="GO" id="GO:0004321">
    <property type="term" value="F:fatty-acyl-CoA synthase activity"/>
    <property type="evidence" value="ECO:0007669"/>
    <property type="project" value="UniProtKB-EC"/>
</dbReference>
<dbReference type="GO" id="GO:0008897">
    <property type="term" value="F:holo-[acyl-carrier-protein] synthase activity"/>
    <property type="evidence" value="ECO:0007669"/>
    <property type="project" value="InterPro"/>
</dbReference>
<dbReference type="GO" id="GO:0000287">
    <property type="term" value="F:magnesium ion binding"/>
    <property type="evidence" value="ECO:0007669"/>
    <property type="project" value="InterPro"/>
</dbReference>
<dbReference type="GO" id="GO:0042759">
    <property type="term" value="P:long-chain fatty acid biosynthetic process"/>
    <property type="evidence" value="ECO:0007669"/>
    <property type="project" value="InterPro"/>
</dbReference>
<dbReference type="CDD" id="cd00828">
    <property type="entry name" value="elong_cond_enzymes"/>
    <property type="match status" value="1"/>
</dbReference>
<dbReference type="CDD" id="cd08950">
    <property type="entry name" value="KR_fFAS_SDR_c_like"/>
    <property type="match status" value="1"/>
</dbReference>
<dbReference type="Gene3D" id="3.30.70.2490">
    <property type="match status" value="1"/>
</dbReference>
<dbReference type="Gene3D" id="3.40.47.10">
    <property type="match status" value="1"/>
</dbReference>
<dbReference type="Gene3D" id="6.10.250.1930">
    <property type="match status" value="1"/>
</dbReference>
<dbReference type="Gene3D" id="3.90.470.20">
    <property type="entry name" value="4'-phosphopantetheinyl transferase domain"/>
    <property type="match status" value="1"/>
</dbReference>
<dbReference type="Gene3D" id="3.40.50.720">
    <property type="entry name" value="NAD(P)-binding Rossmann-like Domain"/>
    <property type="match status" value="2"/>
</dbReference>
<dbReference type="InterPro" id="IPR008278">
    <property type="entry name" value="4-PPantetheinyl_Trfase_dom"/>
</dbReference>
<dbReference type="InterPro" id="IPR037143">
    <property type="entry name" value="4-PPantetheinyl_Trfase_dom_sf"/>
</dbReference>
<dbReference type="InterPro" id="IPR040899">
    <property type="entry name" value="Fas_alpha_ACP"/>
</dbReference>
<dbReference type="InterPro" id="IPR047224">
    <property type="entry name" value="FAS_alpha_su_C"/>
</dbReference>
<dbReference type="InterPro" id="IPR026025">
    <property type="entry name" value="FAS_alpha_yeast"/>
</dbReference>
<dbReference type="InterPro" id="IPR041550">
    <property type="entry name" value="FASI_helical"/>
</dbReference>
<dbReference type="InterPro" id="IPR050830">
    <property type="entry name" value="Fungal_FAS"/>
</dbReference>
<dbReference type="InterPro" id="IPR018201">
    <property type="entry name" value="Ketoacyl_synth_AS"/>
</dbReference>
<dbReference type="InterPro" id="IPR014031">
    <property type="entry name" value="Ketoacyl_synth_C"/>
</dbReference>
<dbReference type="InterPro" id="IPR014030">
    <property type="entry name" value="Ketoacyl_synth_N"/>
</dbReference>
<dbReference type="InterPro" id="IPR036291">
    <property type="entry name" value="NAD(P)-bd_dom_sf"/>
</dbReference>
<dbReference type="InterPro" id="IPR020841">
    <property type="entry name" value="PKS_Beta-ketoAc_synthase_dom"/>
</dbReference>
<dbReference type="InterPro" id="IPR009081">
    <property type="entry name" value="PP-bd_ACP"/>
</dbReference>
<dbReference type="InterPro" id="IPR004568">
    <property type="entry name" value="Ppantetheine-prot_Trfase_dom"/>
</dbReference>
<dbReference type="InterPro" id="IPR002347">
    <property type="entry name" value="SDR_fam"/>
</dbReference>
<dbReference type="InterPro" id="IPR016039">
    <property type="entry name" value="Thiolase-like"/>
</dbReference>
<dbReference type="NCBIfam" id="TIGR00556">
    <property type="entry name" value="pantethn_trn"/>
    <property type="match status" value="1"/>
</dbReference>
<dbReference type="PANTHER" id="PTHR10982:SF21">
    <property type="entry name" value="FATTY ACID SYNTHASE SUBUNIT BETA"/>
    <property type="match status" value="1"/>
</dbReference>
<dbReference type="PANTHER" id="PTHR10982">
    <property type="entry name" value="MALONYL COA-ACYL CARRIER PROTEIN TRANSACYLASE"/>
    <property type="match status" value="1"/>
</dbReference>
<dbReference type="Pfam" id="PF01648">
    <property type="entry name" value="ACPS"/>
    <property type="match status" value="1"/>
</dbReference>
<dbReference type="Pfam" id="PF00106">
    <property type="entry name" value="adh_short"/>
    <property type="match status" value="1"/>
</dbReference>
<dbReference type="Pfam" id="PF18325">
    <property type="entry name" value="Fas_alpha_ACP"/>
    <property type="match status" value="1"/>
</dbReference>
<dbReference type="Pfam" id="PF18314">
    <property type="entry name" value="FAS_I_H"/>
    <property type="match status" value="1"/>
</dbReference>
<dbReference type="Pfam" id="PF00109">
    <property type="entry name" value="ketoacyl-synt"/>
    <property type="match status" value="1"/>
</dbReference>
<dbReference type="Pfam" id="PF02801">
    <property type="entry name" value="Ketoacyl-synt_C"/>
    <property type="match status" value="1"/>
</dbReference>
<dbReference type="PIRSF" id="PIRSF000454">
    <property type="entry name" value="FAS_yeast_alpha"/>
    <property type="match status" value="1"/>
</dbReference>
<dbReference type="SMART" id="SM00825">
    <property type="entry name" value="PKS_KS"/>
    <property type="match status" value="1"/>
</dbReference>
<dbReference type="SUPFAM" id="SSF56214">
    <property type="entry name" value="4'-phosphopantetheinyl transferase"/>
    <property type="match status" value="1"/>
</dbReference>
<dbReference type="SUPFAM" id="SSF51735">
    <property type="entry name" value="NAD(P)-binding Rossmann-fold domains"/>
    <property type="match status" value="1"/>
</dbReference>
<dbReference type="SUPFAM" id="SSF53901">
    <property type="entry name" value="Thiolase-like"/>
    <property type="match status" value="2"/>
</dbReference>
<dbReference type="PROSITE" id="PS50075">
    <property type="entry name" value="CARRIER"/>
    <property type="match status" value="1"/>
</dbReference>
<dbReference type="PROSITE" id="PS00606">
    <property type="entry name" value="KS3_1"/>
    <property type="match status" value="1"/>
</dbReference>
<dbReference type="PROSITE" id="PS52004">
    <property type="entry name" value="KS3_2"/>
    <property type="match status" value="1"/>
</dbReference>
<dbReference type="PROSITE" id="PS00012">
    <property type="entry name" value="PHOSPHOPANTETHEINE"/>
    <property type="match status" value="1"/>
</dbReference>
<name>HEXA_DOTSN</name>
<proteinExistence type="evidence at transcript level"/>
<keyword id="KW-0275">Fatty acid biosynthesis</keyword>
<keyword id="KW-0276">Fatty acid metabolism</keyword>
<keyword id="KW-0444">Lipid biosynthesis</keyword>
<keyword id="KW-0443">Lipid metabolism</keyword>
<keyword id="KW-0460">Magnesium</keyword>
<keyword id="KW-0479">Metal-binding</keyword>
<keyword id="KW-0511">Multifunctional enzyme</keyword>
<keyword id="KW-0521">NADP</keyword>
<keyword id="KW-0560">Oxidoreductase</keyword>
<keyword id="KW-0596">Phosphopantetheine</keyword>
<keyword id="KW-0597">Phosphoprotein</keyword>
<keyword id="KW-1185">Reference proteome</keyword>
<keyword id="KW-0808">Transferase</keyword>